<sequence length="356" mass="36590">MQTLHALLRDIPAPDAEAMARAQQHIDGLLKPPGSLGRLEALAVQLAGMPGLNGTPQVGEKAMLVMCADHGVWDEGVAVSPKIVTAIQAANMTRGTTGVCVLAAQAGAKVHVIDVGIDAEPIPGVVDMRVARGCGNIAVGPAMSRSQAEALLLEVSRYTCDLAQRGVTLFGVGELGMANTTPAAAMVSVFTGSDAKEVVGIGANLPPSRIDNKVDVVRRAIAINQPNPRDGIDVLSKVGGFDLVGMTGVMLGAARCGLPVLLDGFLSYSAALAACQIAPAVRPYLIPSHFSAEKGARIALAHLSMEPYLHMAMRLGEGSGAALAMPIVEAACAMFHNMGELAASNIVLPEGNANAT</sequence>
<dbReference type="EC" id="2.4.2.21" evidence="1"/>
<dbReference type="EMBL" id="CP001127">
    <property type="protein sequence ID" value="ACF91121.1"/>
    <property type="molecule type" value="Genomic_DNA"/>
</dbReference>
<dbReference type="RefSeq" id="WP_001193968.1">
    <property type="nucleotide sequence ID" value="NC_011094.1"/>
</dbReference>
<dbReference type="SMR" id="B4TZP5"/>
<dbReference type="KEGG" id="sew:SeSA_A2185"/>
<dbReference type="HOGENOM" id="CLU_002982_0_0_6"/>
<dbReference type="UniPathway" id="UPA00061">
    <property type="reaction ID" value="UER00516"/>
</dbReference>
<dbReference type="Proteomes" id="UP000001865">
    <property type="component" value="Chromosome"/>
</dbReference>
<dbReference type="GO" id="GO:0008939">
    <property type="term" value="F:nicotinate-nucleotide-dimethylbenzimidazole phosphoribosyltransferase activity"/>
    <property type="evidence" value="ECO:0007669"/>
    <property type="project" value="UniProtKB-UniRule"/>
</dbReference>
<dbReference type="GO" id="GO:0009236">
    <property type="term" value="P:cobalamin biosynthetic process"/>
    <property type="evidence" value="ECO:0007669"/>
    <property type="project" value="UniProtKB-KW"/>
</dbReference>
<dbReference type="CDD" id="cd02439">
    <property type="entry name" value="DMB-PRT_CobT"/>
    <property type="match status" value="1"/>
</dbReference>
<dbReference type="FunFam" id="1.10.1610.10:FF:000001">
    <property type="entry name" value="Nicotinate-nucleotide--dimethylbenzimidazole phosphoribosyltransferase"/>
    <property type="match status" value="1"/>
</dbReference>
<dbReference type="FunFam" id="3.40.50.10210:FF:000001">
    <property type="entry name" value="Nicotinate-nucleotide--dimethylbenzimidazole phosphoribosyltransferase"/>
    <property type="match status" value="1"/>
</dbReference>
<dbReference type="Gene3D" id="1.10.1610.10">
    <property type="match status" value="1"/>
</dbReference>
<dbReference type="Gene3D" id="3.40.50.10210">
    <property type="match status" value="1"/>
</dbReference>
<dbReference type="HAMAP" id="MF_00230">
    <property type="entry name" value="CobT"/>
    <property type="match status" value="1"/>
</dbReference>
<dbReference type="InterPro" id="IPR003200">
    <property type="entry name" value="Nict_dMeBzImd_PRibTrfase"/>
</dbReference>
<dbReference type="InterPro" id="IPR017846">
    <property type="entry name" value="Nict_dMeBzImd_PRibTrfase_bact"/>
</dbReference>
<dbReference type="InterPro" id="IPR023195">
    <property type="entry name" value="Nict_dMeBzImd_PRibTrfase_N"/>
</dbReference>
<dbReference type="InterPro" id="IPR036087">
    <property type="entry name" value="Nict_dMeBzImd_PRibTrfase_sf"/>
</dbReference>
<dbReference type="NCBIfam" id="TIGR03160">
    <property type="entry name" value="cobT_DBIPRT"/>
    <property type="match status" value="1"/>
</dbReference>
<dbReference type="NCBIfam" id="NF000996">
    <property type="entry name" value="PRK00105.1"/>
    <property type="match status" value="1"/>
</dbReference>
<dbReference type="PANTHER" id="PTHR43463">
    <property type="entry name" value="NICOTINATE-NUCLEOTIDE--DIMETHYLBENZIMIDAZOLE PHOSPHORIBOSYLTRANSFERASE"/>
    <property type="match status" value="1"/>
</dbReference>
<dbReference type="PANTHER" id="PTHR43463:SF1">
    <property type="entry name" value="NICOTINATE-NUCLEOTIDE--DIMETHYLBENZIMIDAZOLE PHOSPHORIBOSYLTRANSFERASE"/>
    <property type="match status" value="1"/>
</dbReference>
<dbReference type="Pfam" id="PF02277">
    <property type="entry name" value="DBI_PRT"/>
    <property type="match status" value="1"/>
</dbReference>
<dbReference type="SUPFAM" id="SSF52733">
    <property type="entry name" value="Nicotinate mononucleotide:5,6-dimethylbenzimidazole phosphoribosyltransferase (CobT)"/>
    <property type="match status" value="1"/>
</dbReference>
<proteinExistence type="inferred from homology"/>
<evidence type="ECO:0000255" key="1">
    <source>
        <dbReference type="HAMAP-Rule" id="MF_00230"/>
    </source>
</evidence>
<reference key="1">
    <citation type="journal article" date="2011" name="J. Bacteriol.">
        <title>Comparative genomics of 28 Salmonella enterica isolates: evidence for CRISPR-mediated adaptive sublineage evolution.</title>
        <authorList>
            <person name="Fricke W.F."/>
            <person name="Mammel M.K."/>
            <person name="McDermott P.F."/>
            <person name="Tartera C."/>
            <person name="White D.G."/>
            <person name="Leclerc J.E."/>
            <person name="Ravel J."/>
            <person name="Cebula T.A."/>
        </authorList>
    </citation>
    <scope>NUCLEOTIDE SEQUENCE [LARGE SCALE GENOMIC DNA]</scope>
    <source>
        <strain>CVM19633</strain>
    </source>
</reference>
<organism>
    <name type="scientific">Salmonella schwarzengrund (strain CVM19633)</name>
    <dbReference type="NCBI Taxonomy" id="439843"/>
    <lineage>
        <taxon>Bacteria</taxon>
        <taxon>Pseudomonadati</taxon>
        <taxon>Pseudomonadota</taxon>
        <taxon>Gammaproteobacteria</taxon>
        <taxon>Enterobacterales</taxon>
        <taxon>Enterobacteriaceae</taxon>
        <taxon>Salmonella</taxon>
    </lineage>
</organism>
<keyword id="KW-0169">Cobalamin biosynthesis</keyword>
<keyword id="KW-0328">Glycosyltransferase</keyword>
<keyword id="KW-0808">Transferase</keyword>
<comment type="function">
    <text evidence="1">Catalyzes the synthesis of alpha-ribazole-5'-phosphate from nicotinate mononucleotide (NAMN) and 5,6-dimethylbenzimidazole (DMB).</text>
</comment>
<comment type="catalytic activity">
    <reaction evidence="1">
        <text>5,6-dimethylbenzimidazole + nicotinate beta-D-ribonucleotide = alpha-ribazole 5'-phosphate + nicotinate + H(+)</text>
        <dbReference type="Rhea" id="RHEA:11196"/>
        <dbReference type="ChEBI" id="CHEBI:15378"/>
        <dbReference type="ChEBI" id="CHEBI:15890"/>
        <dbReference type="ChEBI" id="CHEBI:32544"/>
        <dbReference type="ChEBI" id="CHEBI:57502"/>
        <dbReference type="ChEBI" id="CHEBI:57918"/>
        <dbReference type="EC" id="2.4.2.21"/>
    </reaction>
</comment>
<comment type="pathway">
    <text evidence="1">Nucleoside biosynthesis; alpha-ribazole biosynthesis; alpha-ribazole from 5,6-dimethylbenzimidazole: step 1/2.</text>
</comment>
<comment type="subunit">
    <text evidence="1">Homodimer.</text>
</comment>
<comment type="similarity">
    <text evidence="1">Belongs to the CobT family.</text>
</comment>
<protein>
    <recommendedName>
        <fullName evidence="1">Nicotinate-nucleotide--dimethylbenzimidazole phosphoribosyltransferase</fullName>
        <shortName evidence="1">NN:DBI PRT</shortName>
        <ecNumber evidence="1">2.4.2.21</ecNumber>
    </recommendedName>
    <alternativeName>
        <fullName evidence="1">N(1)-alpha-phosphoribosyltransferase</fullName>
    </alternativeName>
</protein>
<gene>
    <name evidence="1" type="primary">cobT</name>
    <name type="ordered locus">SeSA_A2185</name>
</gene>
<name>COBT_SALSV</name>
<accession>B4TZP5</accession>
<feature type="chain" id="PRO_1000100480" description="Nicotinate-nucleotide--dimethylbenzimidazole phosphoribosyltransferase">
    <location>
        <begin position="1"/>
        <end position="356"/>
    </location>
</feature>
<feature type="active site" description="Proton acceptor" evidence="1">
    <location>
        <position position="317"/>
    </location>
</feature>